<keyword id="KW-0028">Amino-acid biosynthesis</keyword>
<keyword id="KW-0055">Arginine biosynthesis</keyword>
<keyword id="KW-0963">Cytoplasm</keyword>
<keyword id="KW-0521">NADP</keyword>
<keyword id="KW-0560">Oxidoreductase</keyword>
<keyword id="KW-1185">Reference proteome</keyword>
<accession>B8DU54</accession>
<comment type="function">
    <text evidence="1">Catalyzes the NADPH-dependent reduction of N-acetyl-5-glutamyl phosphate to yield N-acetyl-L-glutamate 5-semialdehyde.</text>
</comment>
<comment type="catalytic activity">
    <reaction evidence="1">
        <text>N-acetyl-L-glutamate 5-semialdehyde + phosphate + NADP(+) = N-acetyl-L-glutamyl 5-phosphate + NADPH + H(+)</text>
        <dbReference type="Rhea" id="RHEA:21588"/>
        <dbReference type="ChEBI" id="CHEBI:15378"/>
        <dbReference type="ChEBI" id="CHEBI:29123"/>
        <dbReference type="ChEBI" id="CHEBI:43474"/>
        <dbReference type="ChEBI" id="CHEBI:57783"/>
        <dbReference type="ChEBI" id="CHEBI:57936"/>
        <dbReference type="ChEBI" id="CHEBI:58349"/>
        <dbReference type="EC" id="1.2.1.38"/>
    </reaction>
</comment>
<comment type="pathway">
    <text evidence="1">Amino-acid biosynthesis; L-arginine biosynthesis; N(2)-acetyl-L-ornithine from L-glutamate: step 3/4.</text>
</comment>
<comment type="subcellular location">
    <subcellularLocation>
        <location evidence="1">Cytoplasm</location>
    </subcellularLocation>
</comment>
<comment type="similarity">
    <text evidence="1">Belongs to the NAGSA dehydrogenase family. Type 1 subfamily.</text>
</comment>
<reference key="1">
    <citation type="journal article" date="2009" name="J. Bacteriol.">
        <title>Genome sequence of the probiotic bacterium Bifidobacterium animalis subsp. lactis AD011.</title>
        <authorList>
            <person name="Kim J.F."/>
            <person name="Jeong H."/>
            <person name="Yu D.S."/>
            <person name="Choi S.-H."/>
            <person name="Hur C.-G."/>
            <person name="Park M.-S."/>
            <person name="Yoon S.H."/>
            <person name="Kim D.-W."/>
            <person name="Ji G.E."/>
            <person name="Park H.-S."/>
            <person name="Oh T.K."/>
        </authorList>
    </citation>
    <scope>NUCLEOTIDE SEQUENCE [LARGE SCALE GENOMIC DNA]</scope>
    <source>
        <strain>AD011</strain>
    </source>
</reference>
<proteinExistence type="inferred from homology"/>
<organism>
    <name type="scientific">Bifidobacterium animalis subsp. lactis (strain AD011)</name>
    <dbReference type="NCBI Taxonomy" id="442563"/>
    <lineage>
        <taxon>Bacteria</taxon>
        <taxon>Bacillati</taxon>
        <taxon>Actinomycetota</taxon>
        <taxon>Actinomycetes</taxon>
        <taxon>Bifidobacteriales</taxon>
        <taxon>Bifidobacteriaceae</taxon>
        <taxon>Bifidobacterium</taxon>
    </lineage>
</organism>
<protein>
    <recommendedName>
        <fullName evidence="1">N-acetyl-gamma-glutamyl-phosphate reductase</fullName>
        <shortName evidence="1">AGPR</shortName>
        <ecNumber evidence="1">1.2.1.38</ecNumber>
    </recommendedName>
    <alternativeName>
        <fullName evidence="1">N-acetyl-glutamate semialdehyde dehydrogenase</fullName>
        <shortName evidence="1">NAGSA dehydrogenase</shortName>
    </alternativeName>
</protein>
<gene>
    <name evidence="1" type="primary">argC</name>
    <name type="ordered locus">BLA_1245</name>
</gene>
<name>ARGC_BIFA0</name>
<evidence type="ECO:0000255" key="1">
    <source>
        <dbReference type="HAMAP-Rule" id="MF_00150"/>
    </source>
</evidence>
<dbReference type="EC" id="1.2.1.38" evidence="1"/>
<dbReference type="EMBL" id="CP001213">
    <property type="protein sequence ID" value="ACL29533.1"/>
    <property type="molecule type" value="Genomic_DNA"/>
</dbReference>
<dbReference type="RefSeq" id="WP_012619979.1">
    <property type="nucleotide sequence ID" value="NC_011835.1"/>
</dbReference>
<dbReference type="SMR" id="B8DU54"/>
<dbReference type="STRING" id="442563.BLA_1245"/>
<dbReference type="KEGG" id="bla:BLA_1245"/>
<dbReference type="PATRIC" id="fig|442563.4.peg.1308"/>
<dbReference type="HOGENOM" id="CLU_006384_0_0_11"/>
<dbReference type="UniPathway" id="UPA00068">
    <property type="reaction ID" value="UER00108"/>
</dbReference>
<dbReference type="Proteomes" id="UP000002456">
    <property type="component" value="Chromosome"/>
</dbReference>
<dbReference type="GO" id="GO:0005737">
    <property type="term" value="C:cytoplasm"/>
    <property type="evidence" value="ECO:0007669"/>
    <property type="project" value="UniProtKB-SubCell"/>
</dbReference>
<dbReference type="GO" id="GO:0003942">
    <property type="term" value="F:N-acetyl-gamma-glutamyl-phosphate reductase activity"/>
    <property type="evidence" value="ECO:0007669"/>
    <property type="project" value="UniProtKB-UniRule"/>
</dbReference>
<dbReference type="GO" id="GO:0051287">
    <property type="term" value="F:NAD binding"/>
    <property type="evidence" value="ECO:0007669"/>
    <property type="project" value="InterPro"/>
</dbReference>
<dbReference type="GO" id="GO:0070401">
    <property type="term" value="F:NADP+ binding"/>
    <property type="evidence" value="ECO:0007669"/>
    <property type="project" value="InterPro"/>
</dbReference>
<dbReference type="GO" id="GO:0006526">
    <property type="term" value="P:L-arginine biosynthetic process"/>
    <property type="evidence" value="ECO:0007669"/>
    <property type="project" value="UniProtKB-UniRule"/>
</dbReference>
<dbReference type="CDD" id="cd24148">
    <property type="entry name" value="AGPR_1_actinobacAGPR_like"/>
    <property type="match status" value="1"/>
</dbReference>
<dbReference type="CDD" id="cd23934">
    <property type="entry name" value="AGPR_1_C"/>
    <property type="match status" value="1"/>
</dbReference>
<dbReference type="Gene3D" id="3.30.360.10">
    <property type="entry name" value="Dihydrodipicolinate Reductase, domain 2"/>
    <property type="match status" value="1"/>
</dbReference>
<dbReference type="Gene3D" id="3.40.50.720">
    <property type="entry name" value="NAD(P)-binding Rossmann-like Domain"/>
    <property type="match status" value="1"/>
</dbReference>
<dbReference type="HAMAP" id="MF_00150">
    <property type="entry name" value="ArgC_type1"/>
    <property type="match status" value="1"/>
</dbReference>
<dbReference type="InterPro" id="IPR023013">
    <property type="entry name" value="AGPR_AS"/>
</dbReference>
<dbReference type="InterPro" id="IPR000706">
    <property type="entry name" value="AGPR_type-1"/>
</dbReference>
<dbReference type="InterPro" id="IPR036291">
    <property type="entry name" value="NAD(P)-bd_dom_sf"/>
</dbReference>
<dbReference type="InterPro" id="IPR050085">
    <property type="entry name" value="NAGSA_dehydrogenase"/>
</dbReference>
<dbReference type="InterPro" id="IPR000534">
    <property type="entry name" value="Semialdehyde_DH_NAD-bd"/>
</dbReference>
<dbReference type="NCBIfam" id="TIGR01850">
    <property type="entry name" value="argC"/>
    <property type="match status" value="1"/>
</dbReference>
<dbReference type="PANTHER" id="PTHR32338:SF10">
    <property type="entry name" value="N-ACETYL-GAMMA-GLUTAMYL-PHOSPHATE REDUCTASE, CHLOROPLASTIC-RELATED"/>
    <property type="match status" value="1"/>
</dbReference>
<dbReference type="PANTHER" id="PTHR32338">
    <property type="entry name" value="N-ACETYL-GAMMA-GLUTAMYL-PHOSPHATE REDUCTASE, CHLOROPLASTIC-RELATED-RELATED"/>
    <property type="match status" value="1"/>
</dbReference>
<dbReference type="Pfam" id="PF01118">
    <property type="entry name" value="Semialdhyde_dh"/>
    <property type="match status" value="1"/>
</dbReference>
<dbReference type="Pfam" id="PF22698">
    <property type="entry name" value="Semialdhyde_dhC_1"/>
    <property type="match status" value="1"/>
</dbReference>
<dbReference type="SMART" id="SM00859">
    <property type="entry name" value="Semialdhyde_dh"/>
    <property type="match status" value="1"/>
</dbReference>
<dbReference type="SUPFAM" id="SSF55347">
    <property type="entry name" value="Glyceraldehyde-3-phosphate dehydrogenase-like, C-terminal domain"/>
    <property type="match status" value="1"/>
</dbReference>
<dbReference type="SUPFAM" id="SSF51735">
    <property type="entry name" value="NAD(P)-binding Rossmann-fold domains"/>
    <property type="match status" value="1"/>
</dbReference>
<dbReference type="PROSITE" id="PS01224">
    <property type="entry name" value="ARGC"/>
    <property type="match status" value="1"/>
</dbReference>
<feature type="chain" id="PRO_1000123233" description="N-acetyl-gamma-glutamyl-phosphate reductase">
    <location>
        <begin position="1"/>
        <end position="364"/>
    </location>
</feature>
<feature type="active site" evidence="1">
    <location>
        <position position="157"/>
    </location>
</feature>
<sequence length="364" mass="38133">MTKYTVAVAGATGYAGGEALRILAAHPAFEVTAVAGHSSIGHRLGEYQPHIPQLADLIVEDTTPAVLDGHDVIVLALPHGASGALAAQLDDDAVVVDLGADHRLERQQAWDDYYGGDFYQHWTYGMPELILGIGSDGKYVRQRDELTGAKRIAGPGCNVTATTLALQPAIAQGLVDTKSIVADLAVGYSGAGKNLKRTNLLASEAMGSASPYSVGGTHRHIPEIRQNFAHAAGLGASQADMFSLAFTPILVPMSRGILASVSAKLTDEALALTDEQIHDIWVQAYEGQEFIFVLDPGVMPATQNVLGSNAAHVQVAVDRRSGTLHAFTAIDNLNRGTAGQAIESLNIAFGLNDATGLSKIGVAP</sequence>